<reference key="1">
    <citation type="journal article" date="1996" name="Genome Res.">
        <title>Conserved linkage between the puffer fish (Fugu rubripes) and human genes for platelet-derived growth factor receptor and macrophage colony-stimulating factor receptor.</title>
        <authorList>
            <person name="How G.F."/>
            <person name="Venkatesh B."/>
            <person name="Brenner S."/>
        </authorList>
    </citation>
    <scope>NUCLEOTIDE SEQUENCE [GENOMIC DNA]</scope>
</reference>
<sequence length="975" mass="110914">MQSFLPLLMGIMASASSVEWRHPVIWFNSKVVQSSEVVVKPGTSLELKCGGDGPVNWQTRLPKHKRYMSRSPGNLRTIRVARPTAEFTGTYKCFYSAWAQHRHLTSSVHVYVKDPNRVFWTSSTSLRVVRKEGEDYLLPCLLTDPEATDLGLRMDNGTTVPPEMNYTVYRHRGILIRSLQPSFNADYVCTAKVKGVEKTSKTFSINVIQKLRFPPYVFLEMDEYVRIVGEELQIRCMTHNPNFNYNVTWNYTTKSRVTIEERVRSSGENRLDIQSILTISAVDLADTGNISCIGTNEAGVNSSNTYLLVVEKPYIRLWPQLIPKLASQGLSVEVNEGEDLELGVMVEAYPQITDHRWHTPTSPSTSMQEHIYHARLQLKRMNAQEQGQYTFYAKSNLANGSISFHVKMYQKPIAVVRWENITTLTCTSFGYPAPQIIWYQCSGIRPTCNGNNTGLPKQNHPQALTVEVQREEYGAVEVESVFTVGLSNHRMTVECVAFNLVGVSSDTFTVEVSDKLFTSTLIGAAGVLAIFLLLLVFLLYKYKQKPRFEIRWKIIEAREGNNYTFIDPTQLPYNEKWEFPRDKLKLGKVLGAGAFGKVVEATAFGLGEDKDNTLRVAVKMLKANAHSDEREALMSELKILSHLGHHQNIVNLLGACTYGGPVLVITEYCSLGDLLNFLRQKAETFVNLVMNIPEIMENSNDYKNICNQKWYIRSDSGISSTSSSTYLEMRPSQQSHIEASGRKSLCEDNGDWPLDIDDLLRFSLQVAQGLDFLASRNCIHRDVAARNVLLTDKRVAKICDFGLARDIMNDSNYVVKGNARLPVKWMAPESIFDCVYTVQSDVWSYGILLWEIFSLGKSPYPSMAVDSRFYKMVKRGYQMSQPDFALPEIYMIMKMCWNLEPTERPTFSMISQMINRLLGGQDEQEKLIYRNVQPEQVAEGEACDEPKRYDPPCERSCDHEEEEEPLMKTNNYQFC</sequence>
<name>CSF11_TAKRU</name>
<comment type="function">
    <text evidence="1">Tyrosine-protein kinase that acts as a cell-surface receptor for CSF1 and plays an essential role in the regulation of survival, proliferation and differentiation of hematopoietic precursor cells, especially mononuclear phagocytes, such as macrophages and monocytes. Plays an important role in innate immunity and in inflammatory processes. Plays an important role in the regulation of osteoclast proliferation and differentiation, the regulation of bone resorption, and is required for normal bone development. Promotes reorganization of the actin cytoskeleton, regulates formation of membrane ruffles, cell adhesion and cell migration. Activates several signaling pathways in response to ligand binding (By similarity).</text>
</comment>
<comment type="catalytic activity">
    <reaction evidence="5">
        <text>L-tyrosyl-[protein] + ATP = O-phospho-L-tyrosyl-[protein] + ADP + H(+)</text>
        <dbReference type="Rhea" id="RHEA:10596"/>
        <dbReference type="Rhea" id="RHEA-COMP:10136"/>
        <dbReference type="Rhea" id="RHEA-COMP:20101"/>
        <dbReference type="ChEBI" id="CHEBI:15378"/>
        <dbReference type="ChEBI" id="CHEBI:30616"/>
        <dbReference type="ChEBI" id="CHEBI:46858"/>
        <dbReference type="ChEBI" id="CHEBI:61978"/>
        <dbReference type="ChEBI" id="CHEBI:456216"/>
        <dbReference type="EC" id="2.7.10.1"/>
    </reaction>
</comment>
<comment type="activity regulation">
    <text evidence="1">Present in an inactive conformation in the absence of bound ligand. CSF1 binding leads to dimerization and activation by autophosphorylation on tyrosine residues (By similarity).</text>
</comment>
<comment type="subunit">
    <text evidence="1">Monomer. Homodimer. Interacts with CSF1 (By similarity).</text>
</comment>
<comment type="subcellular location">
    <subcellularLocation>
        <location evidence="1">Cell membrane</location>
        <topology evidence="1">Single-pass type I membrane protein</topology>
    </subcellularLocation>
    <text evidence="1">The autophosphorylated receptor is ubiquitinated and internalized, leading to its degradation.</text>
</comment>
<comment type="domain">
    <text evidence="1">The juxtamembrane domain functions as autoinhibitory region. Phosphorylation of tyrosine residues in this region leads to a conformation change and activation of the kinase (By similarity).</text>
</comment>
<comment type="domain">
    <text evidence="1">The activation loop plays an important role in the regulation of kinase activity. Phosphorylation of tyrosine residues in this region leads to a conformation change and activation of the kinase (By similarity).</text>
</comment>
<comment type="PTM">
    <text evidence="1">Autophosphorylated in response to CSF1 binding. autophosphorylation, leading to its degradation.</text>
</comment>
<comment type="PTM">
    <text evidence="1">Ubiquitinated. Becomes rapidly polyubiquitinated after autophosphorylation, leading to its degradation (By similarity).</text>
</comment>
<comment type="similarity">
    <text evidence="4">Belongs to the protein kinase superfamily. Tyr protein kinase family. CSF-1/PDGF receptor subfamily.</text>
</comment>
<keyword id="KW-0067">ATP-binding</keyword>
<keyword id="KW-1003">Cell membrane</keyword>
<keyword id="KW-1015">Disulfide bond</keyword>
<keyword id="KW-0325">Glycoprotein</keyword>
<keyword id="KW-0391">Immunity</keyword>
<keyword id="KW-0393">Immunoglobulin domain</keyword>
<keyword id="KW-0395">Inflammatory response</keyword>
<keyword id="KW-0399">Innate immunity</keyword>
<keyword id="KW-0418">Kinase</keyword>
<keyword id="KW-0472">Membrane</keyword>
<keyword id="KW-0547">Nucleotide-binding</keyword>
<keyword id="KW-0597">Phosphoprotein</keyword>
<keyword id="KW-0675">Receptor</keyword>
<keyword id="KW-1185">Reference proteome</keyword>
<keyword id="KW-0677">Repeat</keyword>
<keyword id="KW-0732">Signal</keyword>
<keyword id="KW-0808">Transferase</keyword>
<keyword id="KW-0812">Transmembrane</keyword>
<keyword id="KW-1133">Transmembrane helix</keyword>
<keyword id="KW-0829">Tyrosine-protein kinase</keyword>
<keyword id="KW-0832">Ubl conjugation</keyword>
<proteinExistence type="inferred from homology"/>
<gene>
    <name type="primary">csf1r1</name>
</gene>
<evidence type="ECO:0000250" key="1"/>
<evidence type="ECO:0000255" key="2"/>
<evidence type="ECO:0000255" key="3">
    <source>
        <dbReference type="PROSITE-ProRule" id="PRU00114"/>
    </source>
</evidence>
<evidence type="ECO:0000255" key="4">
    <source>
        <dbReference type="PROSITE-ProRule" id="PRU00159"/>
    </source>
</evidence>
<evidence type="ECO:0000255" key="5">
    <source>
        <dbReference type="PROSITE-ProRule" id="PRU10028"/>
    </source>
</evidence>
<evidence type="ECO:0000256" key="6">
    <source>
        <dbReference type="SAM" id="MobiDB-lite"/>
    </source>
</evidence>
<accession>P79750</accession>
<organism>
    <name type="scientific">Takifugu rubripes</name>
    <name type="common">Japanese pufferfish</name>
    <name type="synonym">Fugu rubripes</name>
    <dbReference type="NCBI Taxonomy" id="31033"/>
    <lineage>
        <taxon>Eukaryota</taxon>
        <taxon>Metazoa</taxon>
        <taxon>Chordata</taxon>
        <taxon>Craniata</taxon>
        <taxon>Vertebrata</taxon>
        <taxon>Euteleostomi</taxon>
        <taxon>Actinopterygii</taxon>
        <taxon>Neopterygii</taxon>
        <taxon>Teleostei</taxon>
        <taxon>Neoteleostei</taxon>
        <taxon>Acanthomorphata</taxon>
        <taxon>Eupercaria</taxon>
        <taxon>Tetraodontiformes</taxon>
        <taxon>Tetradontoidea</taxon>
        <taxon>Tetraodontidae</taxon>
        <taxon>Takifugu</taxon>
    </lineage>
</organism>
<dbReference type="EC" id="2.7.10.1"/>
<dbReference type="EMBL" id="U63926">
    <property type="protein sequence ID" value="AAC60063.1"/>
    <property type="molecule type" value="Genomic_DNA"/>
</dbReference>
<dbReference type="PIR" id="T30816">
    <property type="entry name" value="T30816"/>
</dbReference>
<dbReference type="SMR" id="P79750"/>
<dbReference type="FunCoup" id="P79750">
    <property type="interactions" value="706"/>
</dbReference>
<dbReference type="STRING" id="31033.ENSTRUP00000082354"/>
<dbReference type="GlyCosmos" id="P79750">
    <property type="glycosylation" value="9 sites, No reported glycans"/>
</dbReference>
<dbReference type="eggNOG" id="KOG0200">
    <property type="taxonomic scope" value="Eukaryota"/>
</dbReference>
<dbReference type="InParanoid" id="P79750"/>
<dbReference type="Proteomes" id="UP000005226">
    <property type="component" value="Unplaced"/>
</dbReference>
<dbReference type="GO" id="GO:1990682">
    <property type="term" value="C:CSF1-CSF1R complex"/>
    <property type="evidence" value="ECO:0007669"/>
    <property type="project" value="TreeGrafter"/>
</dbReference>
<dbReference type="GO" id="GO:0005886">
    <property type="term" value="C:plasma membrane"/>
    <property type="evidence" value="ECO:0007669"/>
    <property type="project" value="UniProtKB-SubCell"/>
</dbReference>
<dbReference type="GO" id="GO:0043235">
    <property type="term" value="C:receptor complex"/>
    <property type="evidence" value="ECO:0007669"/>
    <property type="project" value="TreeGrafter"/>
</dbReference>
<dbReference type="GO" id="GO:0005524">
    <property type="term" value="F:ATP binding"/>
    <property type="evidence" value="ECO:0007669"/>
    <property type="project" value="UniProtKB-KW"/>
</dbReference>
<dbReference type="GO" id="GO:0019955">
    <property type="term" value="F:cytokine binding"/>
    <property type="evidence" value="ECO:0007669"/>
    <property type="project" value="InterPro"/>
</dbReference>
<dbReference type="GO" id="GO:0019838">
    <property type="term" value="F:growth factor binding"/>
    <property type="evidence" value="ECO:0007669"/>
    <property type="project" value="TreeGrafter"/>
</dbReference>
<dbReference type="GO" id="GO:0005011">
    <property type="term" value="F:macrophage colony-stimulating factor receptor activity"/>
    <property type="evidence" value="ECO:0007669"/>
    <property type="project" value="TreeGrafter"/>
</dbReference>
<dbReference type="GO" id="GO:0007169">
    <property type="term" value="P:cell surface receptor protein tyrosine kinase signaling pathway"/>
    <property type="evidence" value="ECO:0007669"/>
    <property type="project" value="InterPro"/>
</dbReference>
<dbReference type="GO" id="GO:0006954">
    <property type="term" value="P:inflammatory response"/>
    <property type="evidence" value="ECO:0007669"/>
    <property type="project" value="UniProtKB-KW"/>
</dbReference>
<dbReference type="GO" id="GO:0045087">
    <property type="term" value="P:innate immune response"/>
    <property type="evidence" value="ECO:0007669"/>
    <property type="project" value="UniProtKB-KW"/>
</dbReference>
<dbReference type="GO" id="GO:0030316">
    <property type="term" value="P:osteoclast differentiation"/>
    <property type="evidence" value="ECO:0007669"/>
    <property type="project" value="TreeGrafter"/>
</dbReference>
<dbReference type="GO" id="GO:0030335">
    <property type="term" value="P:positive regulation of cell migration"/>
    <property type="evidence" value="ECO:0007669"/>
    <property type="project" value="TreeGrafter"/>
</dbReference>
<dbReference type="GO" id="GO:0043408">
    <property type="term" value="P:regulation of MAPK cascade"/>
    <property type="evidence" value="ECO:0007669"/>
    <property type="project" value="TreeGrafter"/>
</dbReference>
<dbReference type="CDD" id="cd05106">
    <property type="entry name" value="PTKc_CSF-1R"/>
    <property type="match status" value="1"/>
</dbReference>
<dbReference type="FunFam" id="2.60.40.10:FF:001029">
    <property type="entry name" value="Macrophage colony-stimulating factor 1 receptor"/>
    <property type="match status" value="1"/>
</dbReference>
<dbReference type="FunFam" id="2.60.40.10:FF:002322">
    <property type="entry name" value="macrophage colony-stimulating factor 1 receptor"/>
    <property type="match status" value="1"/>
</dbReference>
<dbReference type="FunFam" id="1.10.510.10:FF:000177">
    <property type="entry name" value="Mast/stem cell growth factor receptor"/>
    <property type="match status" value="1"/>
</dbReference>
<dbReference type="FunFam" id="3.30.200.20:FF:000025">
    <property type="entry name" value="Platelet-derived growth factor receptor alpha"/>
    <property type="match status" value="1"/>
</dbReference>
<dbReference type="Gene3D" id="2.60.40.10">
    <property type="entry name" value="Immunoglobulins"/>
    <property type="match status" value="5"/>
</dbReference>
<dbReference type="Gene3D" id="3.30.200.20">
    <property type="entry name" value="Phosphorylase Kinase, domain 1"/>
    <property type="match status" value="1"/>
</dbReference>
<dbReference type="Gene3D" id="1.10.510.10">
    <property type="entry name" value="Transferase(Phosphotransferase) domain 1"/>
    <property type="match status" value="1"/>
</dbReference>
<dbReference type="InterPro" id="IPR030658">
    <property type="entry name" value="CSF-1_receptor"/>
</dbReference>
<dbReference type="InterPro" id="IPR007110">
    <property type="entry name" value="Ig-like_dom"/>
</dbReference>
<dbReference type="InterPro" id="IPR036179">
    <property type="entry name" value="Ig-like_dom_sf"/>
</dbReference>
<dbReference type="InterPro" id="IPR013783">
    <property type="entry name" value="Ig-like_fold"/>
</dbReference>
<dbReference type="InterPro" id="IPR003599">
    <property type="entry name" value="Ig_sub"/>
</dbReference>
<dbReference type="InterPro" id="IPR003598">
    <property type="entry name" value="Ig_sub2"/>
</dbReference>
<dbReference type="InterPro" id="IPR011009">
    <property type="entry name" value="Kinase-like_dom_sf"/>
</dbReference>
<dbReference type="InterPro" id="IPR000719">
    <property type="entry name" value="Prot_kinase_dom"/>
</dbReference>
<dbReference type="InterPro" id="IPR017441">
    <property type="entry name" value="Protein_kinase_ATP_BS"/>
</dbReference>
<dbReference type="InterPro" id="IPR050122">
    <property type="entry name" value="RTK"/>
</dbReference>
<dbReference type="InterPro" id="IPR001245">
    <property type="entry name" value="Ser-Thr/Tyr_kinase_cat_dom"/>
</dbReference>
<dbReference type="InterPro" id="IPR008266">
    <property type="entry name" value="Tyr_kinase_AS"/>
</dbReference>
<dbReference type="InterPro" id="IPR020635">
    <property type="entry name" value="Tyr_kinase_cat_dom"/>
</dbReference>
<dbReference type="InterPro" id="IPR001824">
    <property type="entry name" value="Tyr_kinase_rcpt_3_CS"/>
</dbReference>
<dbReference type="PANTHER" id="PTHR24416:SF47">
    <property type="entry name" value="MACROPHAGE COLONY-STIMULATING FACTOR 1 RECEPTOR"/>
    <property type="match status" value="1"/>
</dbReference>
<dbReference type="PANTHER" id="PTHR24416">
    <property type="entry name" value="TYROSINE-PROTEIN KINASE RECEPTOR"/>
    <property type="match status" value="1"/>
</dbReference>
<dbReference type="Pfam" id="PF25305">
    <property type="entry name" value="Ig_PDGFR_d4"/>
    <property type="match status" value="1"/>
</dbReference>
<dbReference type="Pfam" id="PF07714">
    <property type="entry name" value="PK_Tyr_Ser-Thr"/>
    <property type="match status" value="1"/>
</dbReference>
<dbReference type="PIRSF" id="PIRSF500947">
    <property type="entry name" value="CSF-1_receptor"/>
    <property type="match status" value="1"/>
</dbReference>
<dbReference type="PIRSF" id="PIRSF000615">
    <property type="entry name" value="TyrPK_CSF1-R"/>
    <property type="match status" value="1"/>
</dbReference>
<dbReference type="PRINTS" id="PR01832">
    <property type="entry name" value="VEGFRECEPTOR"/>
</dbReference>
<dbReference type="SMART" id="SM00409">
    <property type="entry name" value="IG"/>
    <property type="match status" value="4"/>
</dbReference>
<dbReference type="SMART" id="SM00408">
    <property type="entry name" value="IGc2"/>
    <property type="match status" value="1"/>
</dbReference>
<dbReference type="SMART" id="SM00219">
    <property type="entry name" value="TyrKc"/>
    <property type="match status" value="1"/>
</dbReference>
<dbReference type="SUPFAM" id="SSF48726">
    <property type="entry name" value="Immunoglobulin"/>
    <property type="match status" value="5"/>
</dbReference>
<dbReference type="SUPFAM" id="SSF56112">
    <property type="entry name" value="Protein kinase-like (PK-like)"/>
    <property type="match status" value="1"/>
</dbReference>
<dbReference type="PROSITE" id="PS50835">
    <property type="entry name" value="IG_LIKE"/>
    <property type="match status" value="2"/>
</dbReference>
<dbReference type="PROSITE" id="PS00107">
    <property type="entry name" value="PROTEIN_KINASE_ATP"/>
    <property type="match status" value="1"/>
</dbReference>
<dbReference type="PROSITE" id="PS50011">
    <property type="entry name" value="PROTEIN_KINASE_DOM"/>
    <property type="match status" value="1"/>
</dbReference>
<dbReference type="PROSITE" id="PS00109">
    <property type="entry name" value="PROTEIN_KINASE_TYR"/>
    <property type="match status" value="1"/>
</dbReference>
<dbReference type="PROSITE" id="PS00240">
    <property type="entry name" value="RECEPTOR_TYR_KIN_III"/>
    <property type="match status" value="1"/>
</dbReference>
<feature type="signal peptide" evidence="2">
    <location>
        <begin position="1"/>
        <end position="17"/>
    </location>
</feature>
<feature type="chain" id="PRO_0000249007" description="Macrophage colony-stimulating factor 1 receptor 1">
    <location>
        <begin position="18"/>
        <end position="975"/>
    </location>
</feature>
<feature type="topological domain" description="Extracellular" evidence="2">
    <location>
        <begin position="18"/>
        <end position="519"/>
    </location>
</feature>
<feature type="transmembrane region" description="Helical" evidence="2">
    <location>
        <begin position="520"/>
        <end position="540"/>
    </location>
</feature>
<feature type="topological domain" description="Cytoplasmic" evidence="2">
    <location>
        <begin position="541"/>
        <end position="975"/>
    </location>
</feature>
<feature type="domain" description="Ig-like C2-type 1">
    <location>
        <begin position="34"/>
        <end position="113"/>
    </location>
</feature>
<feature type="domain" description="Ig-like C2-type 2">
    <location>
        <begin position="125"/>
        <end position="208"/>
    </location>
</feature>
<feature type="domain" description="Ig-like C2-type 3">
    <location>
        <begin position="221"/>
        <end position="310"/>
    </location>
</feature>
<feature type="domain" description="Ig-like C2-type 4">
    <location>
        <begin position="329"/>
        <end position="407"/>
    </location>
</feature>
<feature type="domain" description="Ig-like C2-type 5">
    <location>
        <begin position="404"/>
        <end position="513"/>
    </location>
</feature>
<feature type="domain" description="Protein kinase" evidence="4">
    <location>
        <begin position="584"/>
        <end position="918"/>
    </location>
</feature>
<feature type="region of interest" description="Regulatory juxtamembrane domain" evidence="1">
    <location>
        <begin position="544"/>
        <end position="576"/>
    </location>
</feature>
<feature type="region of interest" description="Activation loop" evidence="1">
    <location>
        <begin position="800"/>
        <end position="822"/>
    </location>
</feature>
<feature type="region of interest" description="Disordered" evidence="6">
    <location>
        <begin position="939"/>
        <end position="963"/>
    </location>
</feature>
<feature type="compositionally biased region" description="Basic and acidic residues" evidence="6">
    <location>
        <begin position="944"/>
        <end position="958"/>
    </location>
</feature>
<feature type="active site" description="Proton acceptor" evidence="4 5">
    <location>
        <position position="782"/>
    </location>
</feature>
<feature type="binding site" evidence="4">
    <location>
        <begin position="590"/>
        <end position="598"/>
    </location>
    <ligand>
        <name>ATP</name>
        <dbReference type="ChEBI" id="CHEBI:30616"/>
    </ligand>
</feature>
<feature type="binding site" evidence="4">
    <location>
        <position position="619"/>
    </location>
    <ligand>
        <name>ATP</name>
        <dbReference type="ChEBI" id="CHEBI:30616"/>
    </ligand>
</feature>
<feature type="modified residue" description="Phosphotyrosine; by autocatalysis" evidence="1">
    <location>
        <position position="563"/>
    </location>
</feature>
<feature type="modified residue" description="Phosphotyrosine; by autocatalysis" evidence="1">
    <location>
        <position position="702"/>
    </location>
</feature>
<feature type="modified residue" description="Phosphotyrosine; by autocatalysis" evidence="1">
    <location>
        <position position="726"/>
    </location>
</feature>
<feature type="modified residue" description="Phosphotyrosine; by autocatalysis" evidence="1">
    <location>
        <position position="813"/>
    </location>
</feature>
<feature type="modified residue" description="Phosphotyrosine; by autocatalysis" evidence="1">
    <location>
        <position position="929"/>
    </location>
</feature>
<feature type="modified residue" description="Phosphotyrosine; by autocatalysis" evidence="1">
    <location>
        <position position="972"/>
    </location>
</feature>
<feature type="glycosylation site" description="N-linked (GlcNAc...) asparagine" evidence="2">
    <location>
        <position position="156"/>
    </location>
</feature>
<feature type="glycosylation site" description="N-linked (GlcNAc...) asparagine" evidence="2">
    <location>
        <position position="165"/>
    </location>
</feature>
<feature type="glycosylation site" description="N-linked (GlcNAc...) asparagine" evidence="2">
    <location>
        <position position="246"/>
    </location>
</feature>
<feature type="glycosylation site" description="N-linked (GlcNAc...) asparagine" evidence="2">
    <location>
        <position position="250"/>
    </location>
</feature>
<feature type="glycosylation site" description="N-linked (GlcNAc...) asparagine" evidence="2">
    <location>
        <position position="289"/>
    </location>
</feature>
<feature type="glycosylation site" description="N-linked (GlcNAc...) asparagine" evidence="2">
    <location>
        <position position="301"/>
    </location>
</feature>
<feature type="glycosylation site" description="N-linked (GlcNAc...) asparagine" evidence="2">
    <location>
        <position position="399"/>
    </location>
</feature>
<feature type="glycosylation site" description="N-linked (GlcNAc...) asparagine" evidence="2">
    <location>
        <position position="420"/>
    </location>
</feature>
<feature type="glycosylation site" description="N-linked (GlcNAc...) asparagine" evidence="2">
    <location>
        <position position="451"/>
    </location>
</feature>
<feature type="disulfide bond" evidence="3">
    <location>
        <begin position="49"/>
        <end position="93"/>
    </location>
</feature>
<feature type="disulfide bond" evidence="3">
    <location>
        <begin position="140"/>
        <end position="189"/>
    </location>
</feature>
<feature type="disulfide bond" evidence="3">
    <location>
        <begin position="236"/>
        <end position="292"/>
    </location>
</feature>
<feature type="disulfide bond" evidence="3">
    <location>
        <begin position="426"/>
        <end position="495"/>
    </location>
</feature>
<protein>
    <recommendedName>
        <fullName>Macrophage colony-stimulating factor 1 receptor 1</fullName>
        <shortName>CSF-1-R 1</shortName>
        <ecNumber>2.7.10.1</ecNumber>
    </recommendedName>
</protein>